<proteinExistence type="uncertain"/>
<keyword id="KW-0150">Chloroplast</keyword>
<keyword id="KW-0934">Plastid</keyword>
<name>YCF15_ARAHI</name>
<organism>
    <name type="scientific">Arabis hirsuta</name>
    <name type="common">Hairy rock-cress</name>
    <name type="synonym">Turritis hirsuta</name>
    <dbReference type="NCBI Taxonomy" id="78191"/>
    <lineage>
        <taxon>Eukaryota</taxon>
        <taxon>Viridiplantae</taxon>
        <taxon>Streptophyta</taxon>
        <taxon>Embryophyta</taxon>
        <taxon>Tracheophyta</taxon>
        <taxon>Spermatophyta</taxon>
        <taxon>Magnoliopsida</taxon>
        <taxon>eudicotyledons</taxon>
        <taxon>Gunneridae</taxon>
        <taxon>Pentapetalae</taxon>
        <taxon>rosids</taxon>
        <taxon>malvids</taxon>
        <taxon>Brassicales</taxon>
        <taxon>Brassicaceae</taxon>
        <taxon>Arabideae</taxon>
        <taxon>Arabis</taxon>
    </lineage>
</organism>
<dbReference type="EMBL" id="AP009369">
    <property type="protein sequence ID" value="BAF50067.1"/>
    <property type="molecule type" value="Genomic_DNA"/>
</dbReference>
<dbReference type="EMBL" id="AP009369">
    <property type="protein sequence ID" value="BAF50086.1"/>
    <property type="molecule type" value="Genomic_DNA"/>
</dbReference>
<dbReference type="GO" id="GO:0009507">
    <property type="term" value="C:chloroplast"/>
    <property type="evidence" value="ECO:0007669"/>
    <property type="project" value="UniProtKB-SubCell"/>
</dbReference>
<dbReference type="InterPro" id="IPR019645">
    <property type="entry name" value="Uncharacterised_Ycf15"/>
</dbReference>
<dbReference type="Pfam" id="PF10705">
    <property type="entry name" value="Ycf15"/>
    <property type="match status" value="1"/>
</dbReference>
<reference key="1">
    <citation type="submission" date="2007-03" db="EMBL/GenBank/DDBJ databases">
        <title>Sequencing analysis of Arabis hirsuta chloroplast DNA.</title>
        <authorList>
            <person name="Hosouchi T."/>
            <person name="Tsuruoka H."/>
            <person name="Kotani H."/>
        </authorList>
    </citation>
    <scope>NUCLEOTIDE SEQUENCE [LARGE SCALE GENOMIC DNA]</scope>
</reference>
<gene>
    <name type="primary">ycf15-A</name>
</gene>
<gene>
    <name type="primary">ycf15-B</name>
</gene>
<comment type="subcellular location">
    <subcellularLocation>
        <location>Plastid</location>
        <location>Chloroplast</location>
    </subcellularLocation>
</comment>
<comment type="similarity">
    <text evidence="1">Belongs to the ycf15 family.</text>
</comment>
<comment type="caution">
    <text evidence="1">Could be the product of a pseudogene.</text>
</comment>
<sequence length="75" mass="8883">MLLLRRIEILDQNTMYGWYELPKQEFLNSEQPELLLTTSKKFPLMKDGNPLENQKYACRMKLLLLSVPITNQLNN</sequence>
<geneLocation type="chloroplast"/>
<accession>A4QK62</accession>
<feature type="chain" id="PRO_0000360375" description="Putative uncharacterized protein ycf15">
    <location>
        <begin position="1"/>
        <end position="75"/>
    </location>
</feature>
<evidence type="ECO:0000305" key="1"/>
<protein>
    <recommendedName>
        <fullName>Putative uncharacterized protein ycf15</fullName>
    </recommendedName>
    <alternativeName>
        <fullName>Orf77</fullName>
    </alternativeName>
</protein>